<reference key="1">
    <citation type="journal article" date="1990" name="Nucleic Acids Res.">
        <title>Cloning and nucleotide sequence of the gene encoding the EcaI DNA methyltransferase.</title>
        <authorList>
            <person name="Brenner V."/>
            <person name="Venetianer P."/>
            <person name="Kiss A."/>
        </authorList>
    </citation>
    <scope>NUCLEOTIDE SEQUENCE [GENOMIC DNA]</scope>
    <scope>FUNCTION</scope>
    <scope>PROBABLE CATALYTIC ACTIVITY</scope>
    <source>
        <strain>DSM 30056 / WS 10183</strain>
    </source>
</reference>
<reference key="2">
    <citation type="journal article" date="2003" name="Nucleic Acids Res.">
        <title>A nomenclature for restriction enzymes, DNA methyltransferases, homing endonucleases and their genes.</title>
        <authorList>
            <person name="Roberts R.J."/>
            <person name="Belfort M."/>
            <person name="Bestor T."/>
            <person name="Bhagwat A.S."/>
            <person name="Bickle T.A."/>
            <person name="Bitinaite J."/>
            <person name="Blumenthal R.M."/>
            <person name="Degtyarev S.K."/>
            <person name="Dryden D.T."/>
            <person name="Dybvig K."/>
            <person name="Firman K."/>
            <person name="Gromova E.S."/>
            <person name="Gumport R.I."/>
            <person name="Halford S.E."/>
            <person name="Hattman S."/>
            <person name="Heitman J."/>
            <person name="Hornby D.P."/>
            <person name="Janulaitis A."/>
            <person name="Jeltsch A."/>
            <person name="Josephsen J."/>
            <person name="Kiss A."/>
            <person name="Klaenhammer T.R."/>
            <person name="Kobayashi I."/>
            <person name="Kong H."/>
            <person name="Krueger D.H."/>
            <person name="Lacks S."/>
            <person name="Marinus M.G."/>
            <person name="Miyahara M."/>
            <person name="Morgan R.D."/>
            <person name="Murray N.E."/>
            <person name="Nagaraja V."/>
            <person name="Piekarowicz A."/>
            <person name="Pingoud A."/>
            <person name="Raleigh E."/>
            <person name="Rao D.N."/>
            <person name="Reich N."/>
            <person name="Repin V.E."/>
            <person name="Selker E.U."/>
            <person name="Shaw P.C."/>
            <person name="Stein D.C."/>
            <person name="Stoddard B.L."/>
            <person name="Szybalski W."/>
            <person name="Trautner T.A."/>
            <person name="Van Etten J.L."/>
            <person name="Vitor J.M."/>
            <person name="Wilson G.G."/>
            <person name="Xu S.Y."/>
        </authorList>
    </citation>
    <scope>NOMENCLATURE</scope>
    <scope>SUBTYPE</scope>
</reference>
<dbReference type="EC" id="2.1.1.72" evidence="4"/>
<dbReference type="EMBL" id="X17111">
    <property type="protein sequence ID" value="CAA34968.1"/>
    <property type="molecule type" value="Genomic_DNA"/>
</dbReference>
<dbReference type="PIR" id="S07886">
    <property type="entry name" value="S07886"/>
</dbReference>
<dbReference type="RefSeq" id="WP_072071920.1">
    <property type="nucleotide sequence ID" value="NZ_JAKSGD010000001.1"/>
</dbReference>
<dbReference type="SMR" id="P14827"/>
<dbReference type="REBASE" id="3365">
    <property type="entry name" value="M.EcaI"/>
</dbReference>
<dbReference type="PRO" id="PR:P14827"/>
<dbReference type="GO" id="GO:0005737">
    <property type="term" value="C:cytoplasm"/>
    <property type="evidence" value="ECO:0007669"/>
    <property type="project" value="TreeGrafter"/>
</dbReference>
<dbReference type="GO" id="GO:0003677">
    <property type="term" value="F:DNA binding"/>
    <property type="evidence" value="ECO:0007669"/>
    <property type="project" value="UniProtKB-KW"/>
</dbReference>
<dbReference type="GO" id="GO:0008170">
    <property type="term" value="F:N-methyltransferase activity"/>
    <property type="evidence" value="ECO:0007669"/>
    <property type="project" value="InterPro"/>
</dbReference>
<dbReference type="GO" id="GO:0009007">
    <property type="term" value="F:site-specific DNA-methyltransferase (adenine-specific) activity"/>
    <property type="evidence" value="ECO:0007669"/>
    <property type="project" value="UniProtKB-EC"/>
</dbReference>
<dbReference type="GO" id="GO:0009307">
    <property type="term" value="P:DNA restriction-modification system"/>
    <property type="evidence" value="ECO:0007669"/>
    <property type="project" value="UniProtKB-KW"/>
</dbReference>
<dbReference type="GO" id="GO:0032259">
    <property type="term" value="P:methylation"/>
    <property type="evidence" value="ECO:0007669"/>
    <property type="project" value="UniProtKB-KW"/>
</dbReference>
<dbReference type="Gene3D" id="3.40.50.150">
    <property type="entry name" value="Vaccinia Virus protein VP39"/>
    <property type="match status" value="1"/>
</dbReference>
<dbReference type="InterPro" id="IPR002941">
    <property type="entry name" value="DNA_methylase_N4/N6"/>
</dbReference>
<dbReference type="InterPro" id="IPR002052">
    <property type="entry name" value="DNA_methylase_N6_adenine_CS"/>
</dbReference>
<dbReference type="InterPro" id="IPR002295">
    <property type="entry name" value="N4/N6-MTase_EcoPI_Mod-like"/>
</dbReference>
<dbReference type="InterPro" id="IPR029063">
    <property type="entry name" value="SAM-dependent_MTases_sf"/>
</dbReference>
<dbReference type="PANTHER" id="PTHR13370">
    <property type="entry name" value="RNA METHYLASE-RELATED"/>
    <property type="match status" value="1"/>
</dbReference>
<dbReference type="PANTHER" id="PTHR13370:SF3">
    <property type="entry name" value="TRNA (GUANINE(10)-N2)-METHYLTRANSFERASE HOMOLOG"/>
    <property type="match status" value="1"/>
</dbReference>
<dbReference type="Pfam" id="PF01555">
    <property type="entry name" value="N6_N4_Mtase"/>
    <property type="match status" value="1"/>
</dbReference>
<dbReference type="PRINTS" id="PR00506">
    <property type="entry name" value="D21N6MTFRASE"/>
</dbReference>
<dbReference type="SUPFAM" id="SSF53335">
    <property type="entry name" value="S-adenosyl-L-methionine-dependent methyltransferases"/>
    <property type="match status" value="1"/>
</dbReference>
<dbReference type="PROSITE" id="PS00092">
    <property type="entry name" value="N6_MTASE"/>
    <property type="match status" value="1"/>
</dbReference>
<comment type="function">
    <text evidence="1 4">A beta subtype methylase, recognizes the double-stranded sequence 5'-GGTNACC-3', methylates A-5 on both strands and protects the DNA from cleavage by the EcaI endonuclease.</text>
</comment>
<comment type="catalytic activity">
    <reaction evidence="4">
        <text>a 2'-deoxyadenosine in DNA + S-adenosyl-L-methionine = an N(6)-methyl-2'-deoxyadenosine in DNA + S-adenosyl-L-homocysteine + H(+)</text>
        <dbReference type="Rhea" id="RHEA:15197"/>
        <dbReference type="Rhea" id="RHEA-COMP:12418"/>
        <dbReference type="Rhea" id="RHEA-COMP:12419"/>
        <dbReference type="ChEBI" id="CHEBI:15378"/>
        <dbReference type="ChEBI" id="CHEBI:57856"/>
        <dbReference type="ChEBI" id="CHEBI:59789"/>
        <dbReference type="ChEBI" id="CHEBI:90615"/>
        <dbReference type="ChEBI" id="CHEBI:90616"/>
        <dbReference type="EC" id="2.1.1.72"/>
    </reaction>
</comment>
<comment type="similarity">
    <text evidence="3">Belongs to the N(4)/N(6)-methyltransferase family.</text>
</comment>
<organism>
    <name type="scientific">Enterobacter cloacae</name>
    <dbReference type="NCBI Taxonomy" id="550"/>
    <lineage>
        <taxon>Bacteria</taxon>
        <taxon>Pseudomonadati</taxon>
        <taxon>Pseudomonadota</taxon>
        <taxon>Gammaproteobacteria</taxon>
        <taxon>Enterobacterales</taxon>
        <taxon>Enterobacteriaceae</taxon>
        <taxon>Enterobacter</taxon>
        <taxon>Enterobacter cloacae complex</taxon>
    </lineage>
</organism>
<name>MTEC_ENTCL</name>
<proteinExistence type="evidence at protein level"/>
<evidence type="ECO:0000303" key="1">
    <source>
    </source>
</evidence>
<evidence type="ECO:0000303" key="2">
    <source>
    </source>
</evidence>
<evidence type="ECO:0000305" key="3"/>
<evidence type="ECO:0000305" key="4">
    <source>
    </source>
</evidence>
<sequence>MAVGLNKKEIDGPASQRAVACDLEPALPPIGARVTLNYPGKMDESIILQKKDTKYLRVGSDFAKESSLILPNSFIWSDNSLALNRLMVEGKKAKLIYLDPPYATGMGFSSRSNEHAYDDCLTEAAYLEFMRRRLILMREILDDDGTIYVHIGHQMLGELKCLLDEIFGRERFINLITRRKCSSKNSTKNNFANLNDYILCYSKGKKYIWNRPLKKPDAEWLAKEYPKTDSKGQFKLVPIHAPGVRHGATGGEWKGMLPPPGKHWQYTPEKLDILDASGDIHWSKTGNPRRKVYLTDDKSIGYTDYWEEFRDAHHQSILVTGYPTEKNFNMMKLIVGASSNPGDLVIDPFCGSGSTLHAASLLQRKWIGIDESLFAAKTVMKRFAIGRAPMGDYVNTSLNKQTELPLSLNETARHEYVSNDFNIYVDELTASVSKNELAEIQKAYRDLKANQQ</sequence>
<keyword id="KW-0238">DNA-binding</keyword>
<keyword id="KW-0489">Methyltransferase</keyword>
<keyword id="KW-0680">Restriction system</keyword>
<keyword id="KW-0949">S-adenosyl-L-methionine</keyword>
<keyword id="KW-0808">Transferase</keyword>
<feature type="chain" id="PRO_0000087958" description="Type II methyltransferase M.EcaI">
    <location>
        <begin position="1"/>
        <end position="452"/>
    </location>
</feature>
<gene>
    <name type="primary">ecaIM</name>
</gene>
<protein>
    <recommendedName>
        <fullName evidence="1">Type II methyltransferase M.EcaI</fullName>
        <shortName evidence="2">M.EcaI</shortName>
        <ecNumber evidence="4">2.1.1.72</ecNumber>
    </recommendedName>
    <alternativeName>
        <fullName>Adenine-specific methyltransferase EcaI</fullName>
    </alternativeName>
    <alternativeName>
        <fullName>Modification methylase EcaI</fullName>
    </alternativeName>
</protein>
<accession>P14827</accession>